<gene>
    <name evidence="7" type="primary">Manf</name>
    <name type="synonym">Armet</name>
</gene>
<name>MANF_RAT</name>
<comment type="function">
    <text evidence="2 3 4">Selectively promotes the survival of dopaminergic neurons of the ventral mid-brain (By similarity). Modulates GABAergic transmission to the dopaminergic neurons of the substantia nigra (PubMed:16462600). Enhances spontaneous, as well as evoked, GABAergic inhibitory postsynaptic currents in dopaminergic neurons (PubMed:16462600). Inhibits cell proliferation and endoplasmic reticulum (ER) stress-induced cell death (By similarity). Retained in the ER/sarcoplasmic reticulum (SR) through association with the endoplasmic reticulum chaperone protein HSPA5 under normal conditions (By similarity). Stabilizes HSPA5/BiP in its substrate-bound ADP state, which facilitates HSPA5/BiP incorporation into chaperone-client complexes during endoplasmic reticulum stress, its interaction with HSPA5/BiP inhibits ATP binding to HSPA5/BiP and subsequent nucleotide exchange (By similarity). As a result acts as a repressor of the unfolded protein response (UPR) pathway (By similarity). Up-regulated and secreted by the ER/SR in response to ER stress and hypoxia (By similarity). Following secretion by the ER/SR, directly binds to 3-O-sulfogalactosylceramide, a lipid sulfatide in the outer cell membrane of target cells (By similarity). Sulfatide binding promotes its cellular uptake by endocytosis, and is required for its role in alleviating ER stress and cell toxicity under hypoxic and ER stress conditions (By similarity). Essential for embryonic lung development (By similarity). Required for the correct postnatal temporal and structural development of splenic white pulp (By similarity). Required for the repair-associated myeloid response in skeletal muscle, acts as a regulator of phenotypic transition towards prorepair macrophages in response to muscle injury and as a result limits excessive proinflammatory signaling (By similarity). Represses RELA expression and therefore NF-kB signaling in the myocardium, as a result limits macrophage infiltration of injured tissue and M1 macrophage differentiation in response to myocardial injury (By similarity). Required for endochondral ossification in long bones and the skull during postnatal development (By similarity).</text>
</comment>
<comment type="subunit">
    <text evidence="2 3">Interacts directly (via SAP domain) with HSPA5/BiP; the interaction inhibits ATP binding to HSPA5/BiP and subsequent nucleotide exchange (By similarity). Component of a complex containing at least CRELD2, MANF, MATN3 and PDIA4 (By similarity). Interacts (via C-terminus) with ERN1 (via luminal domain); the interaction is decreased in the presence of increasing concentrations of Ca(2+) (By similarity).</text>
</comment>
<comment type="subcellular location">
    <subcellularLocation>
        <location evidence="2">Secreted</location>
    </subcellularLocation>
    <subcellularLocation>
        <location evidence="2">Endoplasmic reticulum lumen</location>
    </subcellularLocation>
    <subcellularLocation>
        <location evidence="2">Sarcoplasmic reticulum lumen</location>
    </subcellularLocation>
    <text evidence="2">Retained in the endoplasmic reticulum (ER), and sarcoplasmic reticulum (SR) under normal conditions. Up-regulated and secreted by the ER/SR in response to ER stress and hypoxia.</text>
</comment>
<comment type="tissue specificity">
    <text evidence="5">Expressed in plasma cells and macrophages in the splenic marginal zone (at protein level).</text>
</comment>
<comment type="developmental stage">
    <text evidence="5">Expressed in the spleen within one week of birth, expression increases until 12 weeks of age and is localized to the white pulp and macrophages until 6 weeks of age (PubMed:38159526). Expressed in the marginal zone and red pulp of the spleen at 22 weeks of age (PubMed:38159526).</text>
</comment>
<comment type="domain">
    <text evidence="1">The N-terminal region may be responsible for neurotrophic activity while the C-terminal region may play a role in the ER stress response.</text>
</comment>
<comment type="similarity">
    <text evidence="6">Belongs to the ARMET family.</text>
</comment>
<proteinExistence type="evidence at protein level"/>
<reference key="1">
    <citation type="journal article" date="2004" name="Nature">
        <title>Genome sequence of the Brown Norway rat yields insights into mammalian evolution.</title>
        <authorList>
            <person name="Gibbs R.A."/>
            <person name="Weinstock G.M."/>
            <person name="Metzker M.L."/>
            <person name="Muzny D.M."/>
            <person name="Sodergren E.J."/>
            <person name="Scherer S."/>
            <person name="Scott G."/>
            <person name="Steffen D."/>
            <person name="Worley K.C."/>
            <person name="Burch P.E."/>
            <person name="Okwuonu G."/>
            <person name="Hines S."/>
            <person name="Lewis L."/>
            <person name="Deramo C."/>
            <person name="Delgado O."/>
            <person name="Dugan-Rocha S."/>
            <person name="Miner G."/>
            <person name="Morgan M."/>
            <person name="Hawes A."/>
            <person name="Gill R."/>
            <person name="Holt R.A."/>
            <person name="Adams M.D."/>
            <person name="Amanatides P.G."/>
            <person name="Baden-Tillson H."/>
            <person name="Barnstead M."/>
            <person name="Chin S."/>
            <person name="Evans C.A."/>
            <person name="Ferriera S."/>
            <person name="Fosler C."/>
            <person name="Glodek A."/>
            <person name="Gu Z."/>
            <person name="Jennings D."/>
            <person name="Kraft C.L."/>
            <person name="Nguyen T."/>
            <person name="Pfannkoch C.M."/>
            <person name="Sitter C."/>
            <person name="Sutton G.G."/>
            <person name="Venter J.C."/>
            <person name="Woodage T."/>
            <person name="Smith D."/>
            <person name="Lee H.-M."/>
            <person name="Gustafson E."/>
            <person name="Cahill P."/>
            <person name="Kana A."/>
            <person name="Doucette-Stamm L."/>
            <person name="Weinstock K."/>
            <person name="Fechtel K."/>
            <person name="Weiss R.B."/>
            <person name="Dunn D.M."/>
            <person name="Green E.D."/>
            <person name="Blakesley R.W."/>
            <person name="Bouffard G.G."/>
            <person name="De Jong P.J."/>
            <person name="Osoegawa K."/>
            <person name="Zhu B."/>
            <person name="Marra M."/>
            <person name="Schein J."/>
            <person name="Bosdet I."/>
            <person name="Fjell C."/>
            <person name="Jones S."/>
            <person name="Krzywinski M."/>
            <person name="Mathewson C."/>
            <person name="Siddiqui A."/>
            <person name="Wye N."/>
            <person name="McPherson J."/>
            <person name="Zhao S."/>
            <person name="Fraser C.M."/>
            <person name="Shetty J."/>
            <person name="Shatsman S."/>
            <person name="Geer K."/>
            <person name="Chen Y."/>
            <person name="Abramzon S."/>
            <person name="Nierman W.C."/>
            <person name="Havlak P.H."/>
            <person name="Chen R."/>
            <person name="Durbin K.J."/>
            <person name="Egan A."/>
            <person name="Ren Y."/>
            <person name="Song X.-Z."/>
            <person name="Li B."/>
            <person name="Liu Y."/>
            <person name="Qin X."/>
            <person name="Cawley S."/>
            <person name="Cooney A.J."/>
            <person name="D'Souza L.M."/>
            <person name="Martin K."/>
            <person name="Wu J.Q."/>
            <person name="Gonzalez-Garay M.L."/>
            <person name="Jackson A.R."/>
            <person name="Kalafus K.J."/>
            <person name="McLeod M.P."/>
            <person name="Milosavljevic A."/>
            <person name="Virk D."/>
            <person name="Volkov A."/>
            <person name="Wheeler D.A."/>
            <person name="Zhang Z."/>
            <person name="Bailey J.A."/>
            <person name="Eichler E.E."/>
            <person name="Tuzun E."/>
            <person name="Birney E."/>
            <person name="Mongin E."/>
            <person name="Ureta-Vidal A."/>
            <person name="Woodwark C."/>
            <person name="Zdobnov E."/>
            <person name="Bork P."/>
            <person name="Suyama M."/>
            <person name="Torrents D."/>
            <person name="Alexandersson M."/>
            <person name="Trask B.J."/>
            <person name="Young J.M."/>
            <person name="Huang H."/>
            <person name="Wang H."/>
            <person name="Xing H."/>
            <person name="Daniels S."/>
            <person name="Gietzen D."/>
            <person name="Schmidt J."/>
            <person name="Stevens K."/>
            <person name="Vitt U."/>
            <person name="Wingrove J."/>
            <person name="Camara F."/>
            <person name="Mar Alba M."/>
            <person name="Abril J.F."/>
            <person name="Guigo R."/>
            <person name="Smit A."/>
            <person name="Dubchak I."/>
            <person name="Rubin E.M."/>
            <person name="Couronne O."/>
            <person name="Poliakov A."/>
            <person name="Huebner N."/>
            <person name="Ganten D."/>
            <person name="Goesele C."/>
            <person name="Hummel O."/>
            <person name="Kreitler T."/>
            <person name="Lee Y.-A."/>
            <person name="Monti J."/>
            <person name="Schulz H."/>
            <person name="Zimdahl H."/>
            <person name="Himmelbauer H."/>
            <person name="Lehrach H."/>
            <person name="Jacob H.J."/>
            <person name="Bromberg S."/>
            <person name="Gullings-Handley J."/>
            <person name="Jensen-Seaman M.I."/>
            <person name="Kwitek A.E."/>
            <person name="Lazar J."/>
            <person name="Pasko D."/>
            <person name="Tonellato P.J."/>
            <person name="Twigger S."/>
            <person name="Ponting C.P."/>
            <person name="Duarte J.M."/>
            <person name="Rice S."/>
            <person name="Goodstadt L."/>
            <person name="Beatson S.A."/>
            <person name="Emes R.D."/>
            <person name="Winter E.E."/>
            <person name="Webber C."/>
            <person name="Brandt P."/>
            <person name="Nyakatura G."/>
            <person name="Adetobi M."/>
            <person name="Chiaromonte F."/>
            <person name="Elnitski L."/>
            <person name="Eswara P."/>
            <person name="Hardison R.C."/>
            <person name="Hou M."/>
            <person name="Kolbe D."/>
            <person name="Makova K."/>
            <person name="Miller W."/>
            <person name="Nekrutenko A."/>
            <person name="Riemer C."/>
            <person name="Schwartz S."/>
            <person name="Taylor J."/>
            <person name="Yang S."/>
            <person name="Zhang Y."/>
            <person name="Lindpaintner K."/>
            <person name="Andrews T.D."/>
            <person name="Caccamo M."/>
            <person name="Clamp M."/>
            <person name="Clarke L."/>
            <person name="Curwen V."/>
            <person name="Durbin R.M."/>
            <person name="Eyras E."/>
            <person name="Searle S.M."/>
            <person name="Cooper G.M."/>
            <person name="Batzoglou S."/>
            <person name="Brudno M."/>
            <person name="Sidow A."/>
            <person name="Stone E.A."/>
            <person name="Payseur B.A."/>
            <person name="Bourque G."/>
            <person name="Lopez-Otin C."/>
            <person name="Puente X.S."/>
            <person name="Chakrabarti K."/>
            <person name="Chatterji S."/>
            <person name="Dewey C."/>
            <person name="Pachter L."/>
            <person name="Bray N."/>
            <person name="Yap V.B."/>
            <person name="Caspi A."/>
            <person name="Tesler G."/>
            <person name="Pevzner P.A."/>
            <person name="Haussler D."/>
            <person name="Roskin K.M."/>
            <person name="Baertsch R."/>
            <person name="Clawson H."/>
            <person name="Furey T.S."/>
            <person name="Hinrichs A.S."/>
            <person name="Karolchik D."/>
            <person name="Kent W.J."/>
            <person name="Rosenbloom K.R."/>
            <person name="Trumbower H."/>
            <person name="Weirauch M."/>
            <person name="Cooper D.N."/>
            <person name="Stenson P.D."/>
            <person name="Ma B."/>
            <person name="Brent M."/>
            <person name="Arumugam M."/>
            <person name="Shteynberg D."/>
            <person name="Copley R.R."/>
            <person name="Taylor M.S."/>
            <person name="Riethman H."/>
            <person name="Mudunuri U."/>
            <person name="Peterson J."/>
            <person name="Guyer M."/>
            <person name="Felsenfeld A."/>
            <person name="Old S."/>
            <person name="Mockrin S."/>
            <person name="Collins F.S."/>
        </authorList>
    </citation>
    <scope>NUCLEOTIDE SEQUENCE [LARGE SCALE GENOMIC DNA]</scope>
    <source>
        <strain>Brown Norway</strain>
    </source>
</reference>
<reference key="2">
    <citation type="journal article" date="2003" name="J. Mol. Neurosci.">
        <title>MANF: a new mesencephalic, astrocyte-derived neurotrophic factor with selectivity for dopaminergic neurons.</title>
        <authorList>
            <person name="Petrova P."/>
            <person name="Raibekas A."/>
            <person name="Pevsner J."/>
            <person name="Vigo N."/>
            <person name="Anafi M."/>
            <person name="Moore M.K."/>
            <person name="Peaire A.E."/>
            <person name="Shridhar V."/>
            <person name="Smith D.I."/>
            <person name="Kelly J."/>
            <person name="Durocher Y."/>
            <person name="Commissiong J.W."/>
        </authorList>
    </citation>
    <scope>PROTEIN SEQUENCE OF 45-54 AND 121-129</scope>
    <scope>IDENTIFICATION BY MASS SPECTROMETRY</scope>
</reference>
<reference key="3">
    <citation type="journal article" date="2006" name="NeuroReport">
        <title>Mesencephalic astrocyte-derived neurotrophic factor enhances nigral gamma-aminobutyric acid release.</title>
        <authorList>
            <person name="Zhou C."/>
            <person name="Xiao C."/>
            <person name="Commissiong J.W."/>
            <person name="Krnjevic K."/>
            <person name="Ye J.H."/>
        </authorList>
    </citation>
    <scope>FUNCTION</scope>
</reference>
<reference key="4">
    <citation type="journal article" date="2024" name="Immunobiology">
        <title>Deletion of mesencephalic astrocyte-derived neurotrophic factor delays and damages the development of white pulp in spleen.</title>
        <authorList>
            <person name="Zhou C."/>
            <person name="Han D."/>
            <person name="Fang H."/>
            <person name="Huang D."/>
            <person name="Cai H."/>
            <person name="Shen Y."/>
            <person name="Shen Y."/>
            <person name="Liu J."/>
        </authorList>
    </citation>
    <scope>TISSUE SPECIFICITY</scope>
    <scope>DEVELOPMENTAL STAGE</scope>
</reference>
<feature type="signal peptide" evidence="1">
    <location>
        <begin position="1"/>
        <end position="21"/>
    </location>
</feature>
<feature type="chain" id="PRO_0000306859" description="Mesencephalic astrocyte-derived neurotrophic factor">
    <location>
        <begin position="22"/>
        <end position="179"/>
    </location>
</feature>
<feature type="region of interest" description="Interacts with ERN1, EIF2AK3 and ATF6" evidence="2">
    <location>
        <begin position="93"/>
        <end position="155"/>
    </location>
</feature>
<feature type="region of interest" description="Interacts with HSPA5" evidence="3">
    <location>
        <begin position="126"/>
        <end position="169"/>
    </location>
</feature>
<feature type="modified residue" description="Phosphotyrosine" evidence="3">
    <location>
        <position position="73"/>
    </location>
</feature>
<feature type="disulfide bond" evidence="1">
    <location>
        <begin position="27"/>
        <end position="114"/>
    </location>
</feature>
<feature type="disulfide bond" evidence="1">
    <location>
        <begin position="30"/>
        <end position="103"/>
    </location>
</feature>
<feature type="disulfide bond" evidence="1">
    <location>
        <begin position="61"/>
        <end position="72"/>
    </location>
</feature>
<feature type="disulfide bond" evidence="1">
    <location>
        <begin position="148"/>
        <end position="151"/>
    </location>
</feature>
<accession>P0C5H9</accession>
<protein>
    <recommendedName>
        <fullName evidence="6">Mesencephalic astrocyte-derived neurotrophic factor</fullName>
    </recommendedName>
    <alternativeName>
        <fullName>Arginine-rich protein</fullName>
    </alternativeName>
    <alternativeName>
        <fullName>Protein ARMET</fullName>
    </alternativeName>
</protein>
<sequence>MWATRGLAVALALSVLPDSRALRPGDCEVCISYLGRFYQDLKDRDVTFSPATIEEELIKFCREARGKENRLCYYIGATDDAATKIINEVSKPLAHHIPVEKICEKLKKKDSQICELKYDKQIDLSTVDLKKLRVKELKKILDDWGEMCKGCAEKSDYIRKINELMPKYAPKAASARTDL</sequence>
<organism>
    <name type="scientific">Rattus norvegicus</name>
    <name type="common">Rat</name>
    <dbReference type="NCBI Taxonomy" id="10116"/>
    <lineage>
        <taxon>Eukaryota</taxon>
        <taxon>Metazoa</taxon>
        <taxon>Chordata</taxon>
        <taxon>Craniata</taxon>
        <taxon>Vertebrata</taxon>
        <taxon>Euteleostomi</taxon>
        <taxon>Mammalia</taxon>
        <taxon>Eutheria</taxon>
        <taxon>Euarchontoglires</taxon>
        <taxon>Glires</taxon>
        <taxon>Rodentia</taxon>
        <taxon>Myomorpha</taxon>
        <taxon>Muroidea</taxon>
        <taxon>Muridae</taxon>
        <taxon>Murinae</taxon>
        <taxon>Rattus</taxon>
    </lineage>
</organism>
<keyword id="KW-0903">Direct protein sequencing</keyword>
<keyword id="KW-1015">Disulfide bond</keyword>
<keyword id="KW-0256">Endoplasmic reticulum</keyword>
<keyword id="KW-0339">Growth factor</keyword>
<keyword id="KW-0446">Lipid-binding</keyword>
<keyword id="KW-0597">Phosphoprotein</keyword>
<keyword id="KW-1185">Reference proteome</keyword>
<keyword id="KW-0703">Sarcoplasmic reticulum</keyword>
<keyword id="KW-0964">Secreted</keyword>
<keyword id="KW-0732">Signal</keyword>
<keyword id="KW-0346">Stress response</keyword>
<keyword id="KW-0834">Unfolded protein response</keyword>
<evidence type="ECO:0000250" key="1"/>
<evidence type="ECO:0000250" key="2">
    <source>
        <dbReference type="UniProtKB" id="P55145"/>
    </source>
</evidence>
<evidence type="ECO:0000250" key="3">
    <source>
        <dbReference type="UniProtKB" id="Q9CXI5"/>
    </source>
</evidence>
<evidence type="ECO:0000269" key="4">
    <source>
    </source>
</evidence>
<evidence type="ECO:0000269" key="5">
    <source>
    </source>
</evidence>
<evidence type="ECO:0000305" key="6"/>
<evidence type="ECO:0000312" key="7">
    <source>
        <dbReference type="RGD" id="1307252"/>
    </source>
</evidence>
<dbReference type="EMBL" id="AABR03063460">
    <property type="status" value="NOT_ANNOTATED_CDS"/>
    <property type="molecule type" value="Genomic_DNA"/>
</dbReference>
<dbReference type="RefSeq" id="NP_001387993.1">
    <property type="nucleotide sequence ID" value="NM_001401064.1"/>
</dbReference>
<dbReference type="RefSeq" id="XP_006243837.1">
    <property type="nucleotide sequence ID" value="XM_006243775.2"/>
</dbReference>
<dbReference type="SMR" id="P0C5H9"/>
<dbReference type="BioGRID" id="261211">
    <property type="interactions" value="1"/>
</dbReference>
<dbReference type="FunCoup" id="P0C5H9">
    <property type="interactions" value="1931"/>
</dbReference>
<dbReference type="IntAct" id="P0C5H9">
    <property type="interactions" value="1"/>
</dbReference>
<dbReference type="STRING" id="10116.ENSRNOP00000019107"/>
<dbReference type="iPTMnet" id="P0C5H9"/>
<dbReference type="PhosphoSitePlus" id="P0C5H9"/>
<dbReference type="jPOST" id="P0C5H9"/>
<dbReference type="PaxDb" id="10116-ENSRNOP00000019107"/>
<dbReference type="GeneID" id="315989"/>
<dbReference type="UCSC" id="RGD:1307252">
    <property type="organism name" value="rat"/>
</dbReference>
<dbReference type="AGR" id="RGD:1307252"/>
<dbReference type="RGD" id="1307252">
    <property type="gene designation" value="Manf"/>
</dbReference>
<dbReference type="VEuPathDB" id="HostDB:ENSRNOG00000014201"/>
<dbReference type="eggNOG" id="KOG4154">
    <property type="taxonomic scope" value="Eukaryota"/>
</dbReference>
<dbReference type="HOGENOM" id="CLU_099080_1_0_1"/>
<dbReference type="InParanoid" id="P0C5H9"/>
<dbReference type="PhylomeDB" id="P0C5H9"/>
<dbReference type="TreeFam" id="TF314252"/>
<dbReference type="Reactome" id="R-RNO-114608">
    <property type="pathway name" value="Platelet degranulation"/>
</dbReference>
<dbReference type="PRO" id="PR:P0C5H9"/>
<dbReference type="Proteomes" id="UP000002494">
    <property type="component" value="Chromosome 8"/>
</dbReference>
<dbReference type="Bgee" id="ENSRNOG00000014201">
    <property type="expression patterns" value="Expressed in pancreas and 20 other cell types or tissues"/>
</dbReference>
<dbReference type="ExpressionAtlas" id="P0C5H9">
    <property type="expression patterns" value="baseline and differential"/>
</dbReference>
<dbReference type="GO" id="GO:0005783">
    <property type="term" value="C:endoplasmic reticulum"/>
    <property type="evidence" value="ECO:0000318"/>
    <property type="project" value="GO_Central"/>
</dbReference>
<dbReference type="GO" id="GO:0005788">
    <property type="term" value="C:endoplasmic reticulum lumen"/>
    <property type="evidence" value="ECO:0000266"/>
    <property type="project" value="RGD"/>
</dbReference>
<dbReference type="GO" id="GO:0005615">
    <property type="term" value="C:extracellular space"/>
    <property type="evidence" value="ECO:0000314"/>
    <property type="project" value="RGD"/>
</dbReference>
<dbReference type="GO" id="GO:0048471">
    <property type="term" value="C:perinuclear region of cytoplasm"/>
    <property type="evidence" value="ECO:0000314"/>
    <property type="project" value="RGD"/>
</dbReference>
<dbReference type="GO" id="GO:0033018">
    <property type="term" value="C:sarcoplasmic reticulum lumen"/>
    <property type="evidence" value="ECO:0007669"/>
    <property type="project" value="UniProtKB-SubCell"/>
</dbReference>
<dbReference type="GO" id="GO:0008083">
    <property type="term" value="F:growth factor activity"/>
    <property type="evidence" value="ECO:0007669"/>
    <property type="project" value="UniProtKB-KW"/>
</dbReference>
<dbReference type="GO" id="GO:0120146">
    <property type="term" value="F:sulfatide binding"/>
    <property type="evidence" value="ECO:0000266"/>
    <property type="project" value="RGD"/>
</dbReference>
<dbReference type="GO" id="GO:0036500">
    <property type="term" value="P:ATF6-mediated unfolded protein response"/>
    <property type="evidence" value="ECO:0000266"/>
    <property type="project" value="RGD"/>
</dbReference>
<dbReference type="GO" id="GO:0071542">
    <property type="term" value="P:dopaminergic neuron differentiation"/>
    <property type="evidence" value="ECO:0000318"/>
    <property type="project" value="GO_Central"/>
</dbReference>
<dbReference type="GO" id="GO:0031175">
    <property type="term" value="P:neuron projection development"/>
    <property type="evidence" value="ECO:0000318"/>
    <property type="project" value="GO_Central"/>
</dbReference>
<dbReference type="GO" id="GO:1905897">
    <property type="term" value="P:regulation of response to endoplasmic reticulum stress"/>
    <property type="evidence" value="ECO:0000266"/>
    <property type="project" value="RGD"/>
</dbReference>
<dbReference type="GO" id="GO:0002014">
    <property type="term" value="P:vasoconstriction of artery involved in ischemic response to lowering of systemic arterial blood pressure"/>
    <property type="evidence" value="ECO:0000266"/>
    <property type="project" value="RGD"/>
</dbReference>
<dbReference type="FunFam" id="1.10.225.10:FF:000003">
    <property type="entry name" value="Mesencephalic astrocyte-derived neurotrophic factor"/>
    <property type="match status" value="1"/>
</dbReference>
<dbReference type="FunFam" id="1.10.720.30:FF:000003">
    <property type="entry name" value="Mesencephalic astrocyte-derived neurotrophic factor"/>
    <property type="match status" value="1"/>
</dbReference>
<dbReference type="Gene3D" id="1.10.720.30">
    <property type="entry name" value="SAP domain"/>
    <property type="match status" value="1"/>
</dbReference>
<dbReference type="Gene3D" id="1.10.225.10">
    <property type="entry name" value="Saposin-like"/>
    <property type="match status" value="1"/>
</dbReference>
<dbReference type="InterPro" id="IPR045333">
    <property type="entry name" value="ARMET-like"/>
</dbReference>
<dbReference type="InterPro" id="IPR019345">
    <property type="entry name" value="ARMET_C"/>
</dbReference>
<dbReference type="InterPro" id="IPR045332">
    <property type="entry name" value="ARMET_N"/>
</dbReference>
<dbReference type="InterPro" id="IPR036361">
    <property type="entry name" value="SAP_dom_sf"/>
</dbReference>
<dbReference type="PANTHER" id="PTHR12990">
    <property type="entry name" value="ARMET-LIKE PROTEIN"/>
    <property type="match status" value="1"/>
</dbReference>
<dbReference type="PANTHER" id="PTHR12990:SF10">
    <property type="entry name" value="MESENCEPHALIC ASTROCYTE-DERIVED NEUROTROPHIC FACTOR"/>
    <property type="match status" value="1"/>
</dbReference>
<dbReference type="Pfam" id="PF10208">
    <property type="entry name" value="ARMET_C"/>
    <property type="match status" value="1"/>
</dbReference>
<dbReference type="Pfam" id="PF20145">
    <property type="entry name" value="ARMET_N"/>
    <property type="match status" value="1"/>
</dbReference>
<dbReference type="SUPFAM" id="SSF68906">
    <property type="entry name" value="SAP domain"/>
    <property type="match status" value="1"/>
</dbReference>